<comment type="cofactor">
    <cofactor evidence="1">
        <name>Zn(2+)</name>
        <dbReference type="ChEBI" id="CHEBI:29105"/>
    </cofactor>
    <text evidence="1">Binds 1 zinc ion per subunit.</text>
</comment>
<comment type="subcellular location">
    <subcellularLocation>
        <location evidence="1">Cell inner membrane</location>
        <topology evidence="1">Multi-pass membrane protein</topology>
    </subcellularLocation>
</comment>
<comment type="similarity">
    <text evidence="1">Belongs to the peptidase M48B family.</text>
</comment>
<protein>
    <recommendedName>
        <fullName evidence="1">Protease HtpX</fullName>
        <ecNumber evidence="1">3.4.24.-</ecNumber>
    </recommendedName>
    <alternativeName>
        <fullName evidence="1">Heat shock protein HtpX</fullName>
    </alternativeName>
</protein>
<gene>
    <name evidence="1" type="primary">htpX</name>
    <name type="ordered locus">SbBS512_E2097</name>
</gene>
<keyword id="KW-0997">Cell inner membrane</keyword>
<keyword id="KW-1003">Cell membrane</keyword>
<keyword id="KW-0378">Hydrolase</keyword>
<keyword id="KW-0472">Membrane</keyword>
<keyword id="KW-0479">Metal-binding</keyword>
<keyword id="KW-0482">Metalloprotease</keyword>
<keyword id="KW-0645">Protease</keyword>
<keyword id="KW-1185">Reference proteome</keyword>
<keyword id="KW-0812">Transmembrane</keyword>
<keyword id="KW-1133">Transmembrane helix</keyword>
<keyword id="KW-0862">Zinc</keyword>
<evidence type="ECO:0000255" key="1">
    <source>
        <dbReference type="HAMAP-Rule" id="MF_00188"/>
    </source>
</evidence>
<name>HTPX_SHIB3</name>
<reference key="1">
    <citation type="submission" date="2008-05" db="EMBL/GenBank/DDBJ databases">
        <title>Complete sequence of Shigella boydii serotype 18 strain BS512.</title>
        <authorList>
            <person name="Rasko D.A."/>
            <person name="Rosovitz M."/>
            <person name="Maurelli A.T."/>
            <person name="Myers G."/>
            <person name="Seshadri R."/>
            <person name="Cer R."/>
            <person name="Jiang L."/>
            <person name="Ravel J."/>
            <person name="Sebastian Y."/>
        </authorList>
    </citation>
    <scope>NUCLEOTIDE SEQUENCE [LARGE SCALE GENOMIC DNA]</scope>
    <source>
        <strain>CDC 3083-94 / BS512</strain>
    </source>
</reference>
<feature type="chain" id="PRO_1000098847" description="Protease HtpX">
    <location>
        <begin position="1"/>
        <end position="293"/>
    </location>
</feature>
<feature type="transmembrane region" description="Helical" evidence="1">
    <location>
        <begin position="4"/>
        <end position="24"/>
    </location>
</feature>
<feature type="transmembrane region" description="Helical" evidence="1">
    <location>
        <begin position="34"/>
        <end position="54"/>
    </location>
</feature>
<feature type="transmembrane region" description="Helical" evidence="1">
    <location>
        <begin position="158"/>
        <end position="178"/>
    </location>
</feature>
<feature type="transmembrane region" description="Helical" evidence="1">
    <location>
        <begin position="193"/>
        <end position="213"/>
    </location>
</feature>
<feature type="active site" evidence="1">
    <location>
        <position position="140"/>
    </location>
</feature>
<feature type="binding site" evidence="1">
    <location>
        <position position="139"/>
    </location>
    <ligand>
        <name>Zn(2+)</name>
        <dbReference type="ChEBI" id="CHEBI:29105"/>
        <note>catalytic</note>
    </ligand>
</feature>
<feature type="binding site" evidence="1">
    <location>
        <position position="143"/>
    </location>
    <ligand>
        <name>Zn(2+)</name>
        <dbReference type="ChEBI" id="CHEBI:29105"/>
        <note>catalytic</note>
    </ligand>
</feature>
<feature type="binding site" evidence="1">
    <location>
        <position position="222"/>
    </location>
    <ligand>
        <name>Zn(2+)</name>
        <dbReference type="ChEBI" id="CHEBI:29105"/>
        <note>catalytic</note>
    </ligand>
</feature>
<sequence>MMRIALFLLTNLAVMVVFGLVLSLTGIQSSSVQGLMIMALLFGFGGSFVSLLMSKWMALRSVGGEVIEQPRNERERWLVNTVATQARQAGIAMPQVAIYHAPDINAFATGARRDASLVAVSTGLLQNMSPDEAEAVIAHEISHIANGDMVTMTLIQGVVNTFVIFISRILAQLAAGFMGGNRDEGEESNGNPLIYFAVATVLELVFGILASIITMWFSRHREFHADAGSAKLVGREKMIAALQRLKTSYEPQEATSMMAFCINGKSKSLSELFMTHPPLDKRIEALRTGEYLK</sequence>
<accession>B2U471</accession>
<organism>
    <name type="scientific">Shigella boydii serotype 18 (strain CDC 3083-94 / BS512)</name>
    <dbReference type="NCBI Taxonomy" id="344609"/>
    <lineage>
        <taxon>Bacteria</taxon>
        <taxon>Pseudomonadati</taxon>
        <taxon>Pseudomonadota</taxon>
        <taxon>Gammaproteobacteria</taxon>
        <taxon>Enterobacterales</taxon>
        <taxon>Enterobacteriaceae</taxon>
        <taxon>Shigella</taxon>
    </lineage>
</organism>
<dbReference type="EC" id="3.4.24.-" evidence="1"/>
<dbReference type="EMBL" id="CP001063">
    <property type="protein sequence ID" value="ACD09460.1"/>
    <property type="molecule type" value="Genomic_DNA"/>
</dbReference>
<dbReference type="RefSeq" id="WP_000984517.1">
    <property type="nucleotide sequence ID" value="NC_010658.1"/>
</dbReference>
<dbReference type="SMR" id="B2U471"/>
<dbReference type="STRING" id="344609.SbBS512_E2097"/>
<dbReference type="MEROPS" id="M48.002"/>
<dbReference type="GeneID" id="93776079"/>
<dbReference type="KEGG" id="sbc:SbBS512_E2097"/>
<dbReference type="HOGENOM" id="CLU_042266_1_0_6"/>
<dbReference type="Proteomes" id="UP000001030">
    <property type="component" value="Chromosome"/>
</dbReference>
<dbReference type="GO" id="GO:0005886">
    <property type="term" value="C:plasma membrane"/>
    <property type="evidence" value="ECO:0007669"/>
    <property type="project" value="UniProtKB-SubCell"/>
</dbReference>
<dbReference type="GO" id="GO:0004222">
    <property type="term" value="F:metalloendopeptidase activity"/>
    <property type="evidence" value="ECO:0007669"/>
    <property type="project" value="UniProtKB-UniRule"/>
</dbReference>
<dbReference type="GO" id="GO:0008270">
    <property type="term" value="F:zinc ion binding"/>
    <property type="evidence" value="ECO:0007669"/>
    <property type="project" value="UniProtKB-UniRule"/>
</dbReference>
<dbReference type="GO" id="GO:0006508">
    <property type="term" value="P:proteolysis"/>
    <property type="evidence" value="ECO:0007669"/>
    <property type="project" value="UniProtKB-KW"/>
</dbReference>
<dbReference type="CDD" id="cd07335">
    <property type="entry name" value="M48B_HtpX_like"/>
    <property type="match status" value="1"/>
</dbReference>
<dbReference type="FunFam" id="3.30.2010.10:FF:000001">
    <property type="entry name" value="Protease HtpX"/>
    <property type="match status" value="1"/>
</dbReference>
<dbReference type="Gene3D" id="3.30.2010.10">
    <property type="entry name" value="Metalloproteases ('zincins'), catalytic domain"/>
    <property type="match status" value="1"/>
</dbReference>
<dbReference type="HAMAP" id="MF_00188">
    <property type="entry name" value="Pept_M48_protease_HtpX"/>
    <property type="match status" value="1"/>
</dbReference>
<dbReference type="InterPro" id="IPR050083">
    <property type="entry name" value="HtpX_protease"/>
</dbReference>
<dbReference type="InterPro" id="IPR022919">
    <property type="entry name" value="Pept_M48_protease_HtpX"/>
</dbReference>
<dbReference type="InterPro" id="IPR001915">
    <property type="entry name" value="Peptidase_M48"/>
</dbReference>
<dbReference type="NCBIfam" id="NF003965">
    <property type="entry name" value="PRK05457.1"/>
    <property type="match status" value="1"/>
</dbReference>
<dbReference type="PANTHER" id="PTHR43221">
    <property type="entry name" value="PROTEASE HTPX"/>
    <property type="match status" value="1"/>
</dbReference>
<dbReference type="PANTHER" id="PTHR43221:SF1">
    <property type="entry name" value="PROTEASE HTPX"/>
    <property type="match status" value="1"/>
</dbReference>
<dbReference type="Pfam" id="PF01435">
    <property type="entry name" value="Peptidase_M48"/>
    <property type="match status" value="1"/>
</dbReference>
<proteinExistence type="inferred from homology"/>